<comment type="function">
    <text evidence="1">Isomerase that catalyzes the conversion of deoxy-ribose 1-phosphate (dRib-1-P) and ribose 1-phosphate (Rib-1-P) to deoxy-ribose 5-phosphate (dRib-5-P) and ribose 5-phosphate (Rib-5-P), respectively.</text>
</comment>
<comment type="catalytic activity">
    <reaction evidence="1">
        <text>2-deoxy-alpha-D-ribose 1-phosphate = 2-deoxy-D-ribose 5-phosphate</text>
        <dbReference type="Rhea" id="RHEA:27658"/>
        <dbReference type="ChEBI" id="CHEBI:57259"/>
        <dbReference type="ChEBI" id="CHEBI:62877"/>
        <dbReference type="EC" id="5.4.2.7"/>
    </reaction>
</comment>
<comment type="catalytic activity">
    <reaction evidence="1">
        <text>alpha-D-ribose 1-phosphate = D-ribose 5-phosphate</text>
        <dbReference type="Rhea" id="RHEA:18793"/>
        <dbReference type="ChEBI" id="CHEBI:57720"/>
        <dbReference type="ChEBI" id="CHEBI:78346"/>
        <dbReference type="EC" id="5.4.2.7"/>
    </reaction>
</comment>
<comment type="cofactor">
    <cofactor evidence="1 2 3">
        <name>Mn(2+)</name>
        <dbReference type="ChEBI" id="CHEBI:29035"/>
    </cofactor>
    <text evidence="1 2 3">Binds 2 manganese ions.</text>
</comment>
<comment type="pathway">
    <text evidence="1">Carbohydrate degradation; 2-deoxy-D-ribose 1-phosphate degradation; D-glyceraldehyde 3-phosphate and acetaldehyde from 2-deoxy-alpha-D-ribose 1-phosphate: step 1/2.</text>
</comment>
<comment type="subcellular location">
    <subcellularLocation>
        <location evidence="1">Cytoplasm</location>
    </subcellularLocation>
</comment>
<comment type="similarity">
    <text evidence="1">Belongs to the phosphopentomutase family.</text>
</comment>
<sequence>MSTFNRIHLVVLDSVGIGAAPDANNFSNAGVPDGASDTLGHISKTVGLNVPNMAKIGLGNIPRDTPLKTVPAENHPTGYVTKLEEVSLGKDTMTGHWEIMGLNITEPFDTFWNGFPEEIISKIEKFSGRKVIREANKPYSGTAVIDDFGPRQMETGELIIYTSADPVLQIAAHEDVIPLDELYRICEYARSITLERPALLGRIIARPYVGKPRNFTRTANRHDYALSPFAPTVLNKLADAGVSTYAVGKINDIFNGSGITNDMGHNKSNSHGVDTLIKTMGLSAFTKGFSFTNLVDFDALYGHRRNAHGYRDCLHEFDERLPEIIAAMKVDDLLLITADHGNDPTYAGTDHTREYVPLLAYSPSFTGNGVLPVGHYADISATIADNFGVDTAMIGESFLDKLI</sequence>
<name>DEOB_STRMU</name>
<protein>
    <recommendedName>
        <fullName evidence="1">Phosphopentomutase</fullName>
        <ecNumber evidence="1">5.4.2.7</ecNumber>
    </recommendedName>
    <alternativeName>
        <fullName evidence="1">Phosphodeoxyribomutase</fullName>
    </alternativeName>
</protein>
<evidence type="ECO:0000255" key="1">
    <source>
        <dbReference type="HAMAP-Rule" id="MF_00740"/>
    </source>
</evidence>
<evidence type="ECO:0000269" key="2">
    <source ref="2"/>
</evidence>
<evidence type="ECO:0000269" key="3">
    <source ref="3"/>
</evidence>
<evidence type="ECO:0007744" key="4">
    <source>
        <dbReference type="PDB" id="3M7V"/>
    </source>
</evidence>
<evidence type="ECO:0007744" key="5">
    <source>
        <dbReference type="PDB" id="4N7T"/>
    </source>
</evidence>
<evidence type="ECO:0007829" key="6">
    <source>
        <dbReference type="PDB" id="4N7T"/>
    </source>
</evidence>
<accession>Q8DTU0</accession>
<organism>
    <name type="scientific">Streptococcus mutans serotype c (strain ATCC 700610 / UA159)</name>
    <dbReference type="NCBI Taxonomy" id="210007"/>
    <lineage>
        <taxon>Bacteria</taxon>
        <taxon>Bacillati</taxon>
        <taxon>Bacillota</taxon>
        <taxon>Bacilli</taxon>
        <taxon>Lactobacillales</taxon>
        <taxon>Streptococcaceae</taxon>
        <taxon>Streptococcus</taxon>
    </lineage>
</organism>
<keyword id="KW-0002">3D-structure</keyword>
<keyword id="KW-0963">Cytoplasm</keyword>
<keyword id="KW-0413">Isomerase</keyword>
<keyword id="KW-0464">Manganese</keyword>
<keyword id="KW-0479">Metal-binding</keyword>
<keyword id="KW-1185">Reference proteome</keyword>
<gene>
    <name evidence="1" type="primary">deoB</name>
    <name type="ordered locus">SMU_1233</name>
</gene>
<proteinExistence type="evidence at protein level"/>
<dbReference type="EC" id="5.4.2.7" evidence="1"/>
<dbReference type="EMBL" id="AE014133">
    <property type="protein sequence ID" value="AAN58918.1"/>
    <property type="molecule type" value="Genomic_DNA"/>
</dbReference>
<dbReference type="RefSeq" id="NP_721612.1">
    <property type="nucleotide sequence ID" value="NC_004350.2"/>
</dbReference>
<dbReference type="RefSeq" id="WP_002263210.1">
    <property type="nucleotide sequence ID" value="NC_004350.2"/>
</dbReference>
<dbReference type="PDB" id="3M7V">
    <property type="method" value="X-ray"/>
    <property type="resolution" value="2.00 A"/>
    <property type="chains" value="A/B=2-403"/>
</dbReference>
<dbReference type="PDB" id="4N7T">
    <property type="method" value="X-ray"/>
    <property type="resolution" value="2.00 A"/>
    <property type="chains" value="A/B=2-403"/>
</dbReference>
<dbReference type="PDBsum" id="3M7V"/>
<dbReference type="PDBsum" id="4N7T"/>
<dbReference type="SMR" id="Q8DTU0"/>
<dbReference type="STRING" id="210007.SMU_1233"/>
<dbReference type="KEGG" id="smu:SMU_1233"/>
<dbReference type="PATRIC" id="fig|210007.7.peg.1106"/>
<dbReference type="eggNOG" id="COG1015">
    <property type="taxonomic scope" value="Bacteria"/>
</dbReference>
<dbReference type="HOGENOM" id="CLU_053861_0_0_9"/>
<dbReference type="OrthoDB" id="9769930at2"/>
<dbReference type="PhylomeDB" id="Q8DTU0"/>
<dbReference type="UniPathway" id="UPA00002">
    <property type="reaction ID" value="UER00467"/>
</dbReference>
<dbReference type="EvolutionaryTrace" id="Q8DTU0"/>
<dbReference type="Proteomes" id="UP000002512">
    <property type="component" value="Chromosome"/>
</dbReference>
<dbReference type="GO" id="GO:0005829">
    <property type="term" value="C:cytosol"/>
    <property type="evidence" value="ECO:0007669"/>
    <property type="project" value="TreeGrafter"/>
</dbReference>
<dbReference type="GO" id="GO:0000287">
    <property type="term" value="F:magnesium ion binding"/>
    <property type="evidence" value="ECO:0007669"/>
    <property type="project" value="InterPro"/>
</dbReference>
<dbReference type="GO" id="GO:0030145">
    <property type="term" value="F:manganese ion binding"/>
    <property type="evidence" value="ECO:0007669"/>
    <property type="project" value="UniProtKB-UniRule"/>
</dbReference>
<dbReference type="GO" id="GO:0008973">
    <property type="term" value="F:phosphopentomutase activity"/>
    <property type="evidence" value="ECO:0007669"/>
    <property type="project" value="UniProtKB-UniRule"/>
</dbReference>
<dbReference type="GO" id="GO:0006018">
    <property type="term" value="P:2-deoxyribose 1-phosphate catabolic process"/>
    <property type="evidence" value="ECO:0007669"/>
    <property type="project" value="UniProtKB-UniRule"/>
</dbReference>
<dbReference type="GO" id="GO:0006015">
    <property type="term" value="P:5-phosphoribose 1-diphosphate biosynthetic process"/>
    <property type="evidence" value="ECO:0007669"/>
    <property type="project" value="UniProtKB-UniPathway"/>
</dbReference>
<dbReference type="GO" id="GO:0043094">
    <property type="term" value="P:metabolic compound salvage"/>
    <property type="evidence" value="ECO:0007669"/>
    <property type="project" value="InterPro"/>
</dbReference>
<dbReference type="GO" id="GO:0009117">
    <property type="term" value="P:nucleotide metabolic process"/>
    <property type="evidence" value="ECO:0007669"/>
    <property type="project" value="InterPro"/>
</dbReference>
<dbReference type="CDD" id="cd16009">
    <property type="entry name" value="PPM"/>
    <property type="match status" value="1"/>
</dbReference>
<dbReference type="FunFam" id="3.30.70.1250:FF:000001">
    <property type="entry name" value="Phosphopentomutase"/>
    <property type="match status" value="1"/>
</dbReference>
<dbReference type="Gene3D" id="3.40.720.10">
    <property type="entry name" value="Alkaline Phosphatase, subunit A"/>
    <property type="match status" value="1"/>
</dbReference>
<dbReference type="Gene3D" id="3.30.70.1250">
    <property type="entry name" value="Phosphopentomutase"/>
    <property type="match status" value="1"/>
</dbReference>
<dbReference type="HAMAP" id="MF_00740">
    <property type="entry name" value="Phosphopentomut"/>
    <property type="match status" value="1"/>
</dbReference>
<dbReference type="InterPro" id="IPR017850">
    <property type="entry name" value="Alkaline_phosphatase_core_sf"/>
</dbReference>
<dbReference type="InterPro" id="IPR010045">
    <property type="entry name" value="DeoB"/>
</dbReference>
<dbReference type="InterPro" id="IPR006124">
    <property type="entry name" value="Metalloenzyme"/>
</dbReference>
<dbReference type="InterPro" id="IPR024052">
    <property type="entry name" value="Phosphopentomutase_DeoB_cap_sf"/>
</dbReference>
<dbReference type="NCBIfam" id="TIGR01696">
    <property type="entry name" value="deoB"/>
    <property type="match status" value="1"/>
</dbReference>
<dbReference type="NCBIfam" id="NF003766">
    <property type="entry name" value="PRK05362.1"/>
    <property type="match status" value="1"/>
</dbReference>
<dbReference type="PANTHER" id="PTHR21110">
    <property type="entry name" value="PHOSPHOPENTOMUTASE"/>
    <property type="match status" value="1"/>
</dbReference>
<dbReference type="PANTHER" id="PTHR21110:SF0">
    <property type="entry name" value="PHOSPHOPENTOMUTASE"/>
    <property type="match status" value="1"/>
</dbReference>
<dbReference type="Pfam" id="PF01676">
    <property type="entry name" value="Metalloenzyme"/>
    <property type="match status" value="1"/>
</dbReference>
<dbReference type="PIRSF" id="PIRSF001491">
    <property type="entry name" value="Ppentomutase"/>
    <property type="match status" value="1"/>
</dbReference>
<dbReference type="SUPFAM" id="SSF53649">
    <property type="entry name" value="Alkaline phosphatase-like"/>
    <property type="match status" value="1"/>
</dbReference>
<dbReference type="SUPFAM" id="SSF143856">
    <property type="entry name" value="DeoB insert domain-like"/>
    <property type="match status" value="1"/>
</dbReference>
<reference key="1">
    <citation type="journal article" date="2002" name="Proc. Natl. Acad. Sci. U.S.A.">
        <title>Genome sequence of Streptococcus mutans UA159, a cariogenic dental pathogen.</title>
        <authorList>
            <person name="Ajdic D.J."/>
            <person name="McShan W.M."/>
            <person name="McLaughlin R.E."/>
            <person name="Savic G."/>
            <person name="Chang J."/>
            <person name="Carson M.B."/>
            <person name="Primeaux C."/>
            <person name="Tian R."/>
            <person name="Kenton S."/>
            <person name="Jia H.G."/>
            <person name="Lin S.P."/>
            <person name="Qian Y."/>
            <person name="Li S."/>
            <person name="Zhu H."/>
            <person name="Najar F.Z."/>
            <person name="Lai H."/>
            <person name="White J."/>
            <person name="Roe B.A."/>
            <person name="Ferretti J.J."/>
        </authorList>
    </citation>
    <scope>NUCLEOTIDE SEQUENCE [LARGE SCALE GENOMIC DNA]</scope>
    <source>
        <strain>ATCC 700610 / UA159</strain>
    </source>
</reference>
<reference evidence="4" key="2">
    <citation type="submission" date="2010-03" db="PDB data bank">
        <title>Crystal structure of phosphopentomutase from Streptococcus mutans.</title>
        <authorList>
            <person name="Fedorov A.A."/>
            <person name="Bonanno J."/>
            <person name="Fedorov E.V."/>
            <person name="Burley S.K."/>
            <person name="Almo S.C."/>
        </authorList>
    </citation>
    <scope>X-RAY CRYSTALLOGRAPHY (2.00 ANGSTROMS) OF 2-403 IN COMPLEX WITH MN(2+)</scope>
</reference>
<reference evidence="5" key="3">
    <citation type="submission" date="2013-10" db="PDB data bank">
        <title>Crystal structure of phosphorylated phosphopentomutase from Streptococcus mutans.</title>
        <authorList>
            <person name="Fedorov A.A."/>
            <person name="Fedorov E.V."/>
            <person name="Bonanno J."/>
            <person name="Burley S.K."/>
            <person name="Almo S.C."/>
        </authorList>
    </citation>
    <scope>X-RAY CRYSTALLOGRAPHY (2.00 ANGSTROMS) OF 2-403 IN COMPLEX WITH MN(2+)</scope>
</reference>
<feature type="chain" id="PRO_0000199851" description="Phosphopentomutase">
    <location>
        <begin position="1"/>
        <end position="403"/>
    </location>
</feature>
<feature type="binding site" evidence="1 4 5">
    <location>
        <position position="13"/>
    </location>
    <ligand>
        <name>Mn(2+)</name>
        <dbReference type="ChEBI" id="CHEBI:29035"/>
        <label>1</label>
    </ligand>
</feature>
<feature type="binding site" evidence="1 4 5">
    <location>
        <position position="298"/>
    </location>
    <ligand>
        <name>Mn(2+)</name>
        <dbReference type="ChEBI" id="CHEBI:29035"/>
        <label>2</label>
    </ligand>
</feature>
<feature type="binding site" evidence="1 4 5">
    <location>
        <position position="303"/>
    </location>
    <ligand>
        <name>Mn(2+)</name>
        <dbReference type="ChEBI" id="CHEBI:29035"/>
        <label>2</label>
    </ligand>
</feature>
<feature type="binding site" evidence="1 4 5">
    <location>
        <position position="339"/>
    </location>
    <ligand>
        <name>Mn(2+)</name>
        <dbReference type="ChEBI" id="CHEBI:29035"/>
        <label>1</label>
    </ligand>
</feature>
<feature type="binding site" evidence="1 4 5">
    <location>
        <position position="340"/>
    </location>
    <ligand>
        <name>Mn(2+)</name>
        <dbReference type="ChEBI" id="CHEBI:29035"/>
        <label>1</label>
    </ligand>
</feature>
<feature type="binding site" evidence="1 4 5">
    <location>
        <position position="351"/>
    </location>
    <ligand>
        <name>Mn(2+)</name>
        <dbReference type="ChEBI" id="CHEBI:29035"/>
        <label>2</label>
    </ligand>
</feature>
<feature type="strand" evidence="6">
    <location>
        <begin position="4"/>
        <end position="12"/>
    </location>
</feature>
<feature type="helix" evidence="6">
    <location>
        <begin position="23"/>
        <end position="25"/>
    </location>
</feature>
<feature type="strand" evidence="6">
    <location>
        <begin position="26"/>
        <end position="28"/>
    </location>
</feature>
<feature type="helix" evidence="6">
    <location>
        <begin position="33"/>
        <end position="35"/>
    </location>
</feature>
<feature type="helix" evidence="6">
    <location>
        <begin position="38"/>
        <end position="45"/>
    </location>
</feature>
<feature type="helix" evidence="6">
    <location>
        <begin position="51"/>
        <end position="56"/>
    </location>
</feature>
<feature type="helix" evidence="6">
    <location>
        <begin position="58"/>
        <end position="60"/>
    </location>
</feature>
<feature type="strand" evidence="6">
    <location>
        <begin position="77"/>
        <end position="84"/>
    </location>
</feature>
<feature type="helix" evidence="6">
    <location>
        <begin position="92"/>
        <end position="99"/>
    </location>
</feature>
<feature type="helix" evidence="6">
    <location>
        <begin position="117"/>
        <end position="127"/>
    </location>
</feature>
<feature type="helix" evidence="6">
    <location>
        <begin position="133"/>
        <end position="135"/>
    </location>
</feature>
<feature type="strand" evidence="6">
    <location>
        <begin position="136"/>
        <end position="138"/>
    </location>
</feature>
<feature type="helix" evidence="6">
    <location>
        <begin position="141"/>
        <end position="155"/>
    </location>
</feature>
<feature type="strand" evidence="6">
    <location>
        <begin position="158"/>
        <end position="162"/>
    </location>
</feature>
<feature type="strand" evidence="6">
    <location>
        <begin position="164"/>
        <end position="173"/>
    </location>
</feature>
<feature type="turn" evidence="6">
    <location>
        <begin position="174"/>
        <end position="176"/>
    </location>
</feature>
<feature type="helix" evidence="6">
    <location>
        <begin position="179"/>
        <end position="191"/>
    </location>
</feature>
<feature type="strand" evidence="6">
    <location>
        <begin position="201"/>
        <end position="211"/>
    </location>
</feature>
<feature type="strand" evidence="6">
    <location>
        <begin position="214"/>
        <end position="217"/>
    </location>
</feature>
<feature type="strand" evidence="6">
    <location>
        <begin position="222"/>
        <end position="225"/>
    </location>
</feature>
<feature type="helix" evidence="6">
    <location>
        <begin position="233"/>
        <end position="239"/>
    </location>
</feature>
<feature type="strand" evidence="6">
    <location>
        <begin position="243"/>
        <end position="247"/>
    </location>
</feature>
<feature type="helix" evidence="6">
    <location>
        <begin position="250"/>
        <end position="254"/>
    </location>
</feature>
<feature type="turn" evidence="6">
    <location>
        <begin position="255"/>
        <end position="258"/>
    </location>
</feature>
<feature type="strand" evidence="6">
    <location>
        <begin position="260"/>
        <end position="262"/>
    </location>
</feature>
<feature type="helix" evidence="6">
    <location>
        <begin position="269"/>
        <end position="281"/>
    </location>
</feature>
<feature type="strand" evidence="6">
    <location>
        <begin position="287"/>
        <end position="294"/>
    </location>
</feature>
<feature type="helix" evidence="6">
    <location>
        <begin position="296"/>
        <end position="299"/>
    </location>
</feature>
<feature type="turn" evidence="6">
    <location>
        <begin position="300"/>
        <end position="305"/>
    </location>
</feature>
<feature type="helix" evidence="6">
    <location>
        <begin position="307"/>
        <end position="326"/>
    </location>
</feature>
<feature type="strand" evidence="6">
    <location>
        <begin position="332"/>
        <end position="337"/>
    </location>
</feature>
<feature type="strand" evidence="6">
    <location>
        <begin position="339"/>
        <end position="341"/>
    </location>
</feature>
<feature type="strand" evidence="6">
    <location>
        <begin position="346"/>
        <end position="350"/>
    </location>
</feature>
<feature type="strand" evidence="6">
    <location>
        <begin position="356"/>
        <end position="361"/>
    </location>
</feature>
<feature type="helix" evidence="6">
    <location>
        <begin position="378"/>
        <end position="387"/>
    </location>
</feature>
<feature type="helix" evidence="6">
    <location>
        <begin position="399"/>
        <end position="402"/>
    </location>
</feature>